<feature type="chain" id="PRO_0000148112" description="ATP-dependent protease subunit HslV">
    <location>
        <begin position="1"/>
        <end position="180"/>
    </location>
</feature>
<feature type="active site" evidence="1">
    <location>
        <position position="5"/>
    </location>
</feature>
<feature type="binding site" evidence="1">
    <location>
        <position position="165"/>
    </location>
    <ligand>
        <name>Na(+)</name>
        <dbReference type="ChEBI" id="CHEBI:29101"/>
    </ligand>
</feature>
<feature type="binding site" evidence="1">
    <location>
        <position position="168"/>
    </location>
    <ligand>
        <name>Na(+)</name>
        <dbReference type="ChEBI" id="CHEBI:29101"/>
    </ligand>
</feature>
<feature type="binding site" evidence="1">
    <location>
        <position position="171"/>
    </location>
    <ligand>
        <name>Na(+)</name>
        <dbReference type="ChEBI" id="CHEBI:29101"/>
    </ligand>
</feature>
<comment type="function">
    <text evidence="1">Protease subunit of a proteasome-like degradation complex believed to be a general protein degrading machinery.</text>
</comment>
<comment type="catalytic activity">
    <reaction evidence="1">
        <text>ATP-dependent cleavage of peptide bonds with broad specificity.</text>
        <dbReference type="EC" id="3.4.25.2"/>
    </reaction>
</comment>
<comment type="activity regulation">
    <text evidence="1">Allosterically activated by HslU binding.</text>
</comment>
<comment type="subunit">
    <text evidence="1">A double ring-shaped homohexamer of HslV is capped on each side by a ring-shaped HslU homohexamer. The assembly of the HslU/HslV complex is dependent on binding of ATP.</text>
</comment>
<comment type="subcellular location">
    <subcellularLocation>
        <location evidence="1">Cytoplasm</location>
    </subcellularLocation>
</comment>
<comment type="similarity">
    <text evidence="1">Belongs to the peptidase T1B family. HslV subfamily.</text>
</comment>
<keyword id="KW-0021">Allosteric enzyme</keyword>
<keyword id="KW-0963">Cytoplasm</keyword>
<keyword id="KW-0378">Hydrolase</keyword>
<keyword id="KW-0479">Metal-binding</keyword>
<keyword id="KW-0645">Protease</keyword>
<keyword id="KW-1185">Reference proteome</keyword>
<keyword id="KW-0915">Sodium</keyword>
<keyword id="KW-0888">Threonine protease</keyword>
<evidence type="ECO:0000255" key="1">
    <source>
        <dbReference type="HAMAP-Rule" id="MF_00248"/>
    </source>
</evidence>
<proteinExistence type="inferred from homology"/>
<protein>
    <recommendedName>
        <fullName evidence="1">ATP-dependent protease subunit HslV</fullName>
        <ecNumber evidence="1">3.4.25.2</ecNumber>
    </recommendedName>
</protein>
<name>HSLV_HELHP</name>
<gene>
    <name evidence="1" type="primary">hslV</name>
    <name type="ordered locus">HH_0310</name>
</gene>
<organism>
    <name type="scientific">Helicobacter hepaticus (strain ATCC 51449 / 3B1)</name>
    <dbReference type="NCBI Taxonomy" id="235279"/>
    <lineage>
        <taxon>Bacteria</taxon>
        <taxon>Pseudomonadati</taxon>
        <taxon>Campylobacterota</taxon>
        <taxon>Epsilonproteobacteria</taxon>
        <taxon>Campylobacterales</taxon>
        <taxon>Helicobacteraceae</taxon>
        <taxon>Helicobacter</taxon>
    </lineage>
</organism>
<reference key="1">
    <citation type="journal article" date="2003" name="Proc. Natl. Acad. Sci. U.S.A.">
        <title>The complete genome sequence of the carcinogenic bacterium Helicobacter hepaticus.</title>
        <authorList>
            <person name="Suerbaum S."/>
            <person name="Josenhans C."/>
            <person name="Sterzenbach T."/>
            <person name="Drescher B."/>
            <person name="Brandt P."/>
            <person name="Bell M."/>
            <person name="Droege M."/>
            <person name="Fartmann B."/>
            <person name="Fischer H.-P."/>
            <person name="Ge Z."/>
            <person name="Hoerster A."/>
            <person name="Holland R."/>
            <person name="Klein K."/>
            <person name="Koenig J."/>
            <person name="Macko L."/>
            <person name="Mendz G.L."/>
            <person name="Nyakatura G."/>
            <person name="Schauer D.B."/>
            <person name="Shen Z."/>
            <person name="Weber J."/>
            <person name="Frosch M."/>
            <person name="Fox J.G."/>
        </authorList>
    </citation>
    <scope>NUCLEOTIDE SEQUENCE [LARGE SCALE GENOMIC DNA]</scope>
    <source>
        <strain>ATCC 51449 / 3B1</strain>
    </source>
</reference>
<sequence>MFEATTILGYKGEYNGKKCAIIGGDGQVTFGNCVLKNNATKIRTLYNGEILSGFAGSTADAFSLFDMFERILEGRKGDLVRSVLEFSKEWRKDKYLRKLEAMMIVLNTEHIYILSGTGDVVEPEDGTIAAIGSGGNYALSAARALHNYASLPPREIVEHSLAIAGELCIYTNTNIKILEL</sequence>
<dbReference type="EC" id="3.4.25.2" evidence="1"/>
<dbReference type="EMBL" id="AE017125">
    <property type="protein sequence ID" value="AAP76907.1"/>
    <property type="molecule type" value="Genomic_DNA"/>
</dbReference>
<dbReference type="RefSeq" id="WP_011115153.1">
    <property type="nucleotide sequence ID" value="NC_004917.1"/>
</dbReference>
<dbReference type="SMR" id="Q7VJD3"/>
<dbReference type="STRING" id="235279.HH_0310"/>
<dbReference type="KEGG" id="hhe:HH_0310"/>
<dbReference type="eggNOG" id="COG5405">
    <property type="taxonomic scope" value="Bacteria"/>
</dbReference>
<dbReference type="HOGENOM" id="CLU_093872_1_1_7"/>
<dbReference type="OrthoDB" id="9804884at2"/>
<dbReference type="Proteomes" id="UP000002495">
    <property type="component" value="Chromosome"/>
</dbReference>
<dbReference type="GO" id="GO:0009376">
    <property type="term" value="C:HslUV protease complex"/>
    <property type="evidence" value="ECO:0007669"/>
    <property type="project" value="UniProtKB-UniRule"/>
</dbReference>
<dbReference type="GO" id="GO:0005839">
    <property type="term" value="C:proteasome core complex"/>
    <property type="evidence" value="ECO:0007669"/>
    <property type="project" value="InterPro"/>
</dbReference>
<dbReference type="GO" id="GO:0046872">
    <property type="term" value="F:metal ion binding"/>
    <property type="evidence" value="ECO:0007669"/>
    <property type="project" value="UniProtKB-KW"/>
</dbReference>
<dbReference type="GO" id="GO:0004298">
    <property type="term" value="F:threonine-type endopeptidase activity"/>
    <property type="evidence" value="ECO:0007669"/>
    <property type="project" value="UniProtKB-KW"/>
</dbReference>
<dbReference type="GO" id="GO:0051603">
    <property type="term" value="P:proteolysis involved in protein catabolic process"/>
    <property type="evidence" value="ECO:0007669"/>
    <property type="project" value="InterPro"/>
</dbReference>
<dbReference type="CDD" id="cd01913">
    <property type="entry name" value="protease_HslV"/>
    <property type="match status" value="1"/>
</dbReference>
<dbReference type="Gene3D" id="3.60.20.10">
    <property type="entry name" value="Glutamine Phosphoribosylpyrophosphate, subunit 1, domain 1"/>
    <property type="match status" value="1"/>
</dbReference>
<dbReference type="HAMAP" id="MF_00248">
    <property type="entry name" value="HslV"/>
    <property type="match status" value="1"/>
</dbReference>
<dbReference type="InterPro" id="IPR022281">
    <property type="entry name" value="ATP-dep_Prtase_HsIV_su"/>
</dbReference>
<dbReference type="InterPro" id="IPR029055">
    <property type="entry name" value="Ntn_hydrolases_N"/>
</dbReference>
<dbReference type="InterPro" id="IPR001353">
    <property type="entry name" value="Proteasome_sua/b"/>
</dbReference>
<dbReference type="InterPro" id="IPR023333">
    <property type="entry name" value="Proteasome_suB-type"/>
</dbReference>
<dbReference type="NCBIfam" id="TIGR03692">
    <property type="entry name" value="ATP_dep_HslV"/>
    <property type="match status" value="1"/>
</dbReference>
<dbReference type="NCBIfam" id="NF003964">
    <property type="entry name" value="PRK05456.1"/>
    <property type="match status" value="1"/>
</dbReference>
<dbReference type="PANTHER" id="PTHR32194:SF0">
    <property type="entry name" value="ATP-DEPENDENT PROTEASE SUBUNIT HSLV"/>
    <property type="match status" value="1"/>
</dbReference>
<dbReference type="PANTHER" id="PTHR32194">
    <property type="entry name" value="METALLOPROTEASE TLDD"/>
    <property type="match status" value="1"/>
</dbReference>
<dbReference type="Pfam" id="PF00227">
    <property type="entry name" value="Proteasome"/>
    <property type="match status" value="1"/>
</dbReference>
<dbReference type="SUPFAM" id="SSF56235">
    <property type="entry name" value="N-terminal nucleophile aminohydrolases (Ntn hydrolases)"/>
    <property type="match status" value="1"/>
</dbReference>
<dbReference type="PROSITE" id="PS51476">
    <property type="entry name" value="PROTEASOME_BETA_2"/>
    <property type="match status" value="1"/>
</dbReference>
<accession>Q7VJD3</accession>